<reference key="1">
    <citation type="journal article" date="1998" name="Science">
        <title>Complete genome sequence of Treponema pallidum, the syphilis spirochete.</title>
        <authorList>
            <person name="Fraser C.M."/>
            <person name="Norris S.J."/>
            <person name="Weinstock G.M."/>
            <person name="White O."/>
            <person name="Sutton G.G."/>
            <person name="Dodson R.J."/>
            <person name="Gwinn M.L."/>
            <person name="Hickey E.K."/>
            <person name="Clayton R.A."/>
            <person name="Ketchum K.A."/>
            <person name="Sodergren E."/>
            <person name="Hardham J.M."/>
            <person name="McLeod M.P."/>
            <person name="Salzberg S.L."/>
            <person name="Peterson J.D."/>
            <person name="Khalak H.G."/>
            <person name="Richardson D.L."/>
            <person name="Howell J.K."/>
            <person name="Chidambaram M."/>
            <person name="Utterback T.R."/>
            <person name="McDonald L.A."/>
            <person name="Artiach P."/>
            <person name="Bowman C."/>
            <person name="Cotton M.D."/>
            <person name="Fujii C."/>
            <person name="Garland S.A."/>
            <person name="Hatch B."/>
            <person name="Horst K."/>
            <person name="Roberts K.M."/>
            <person name="Sandusky M."/>
            <person name="Weidman J.F."/>
            <person name="Smith H.O."/>
            <person name="Venter J.C."/>
        </authorList>
    </citation>
    <scope>NUCLEOTIDE SEQUENCE [LARGE SCALE GENOMIC DNA]</scope>
    <source>
        <strain>Nichols</strain>
    </source>
</reference>
<accession>O83500</accession>
<evidence type="ECO:0000256" key="1">
    <source>
        <dbReference type="SAM" id="MobiDB-lite"/>
    </source>
</evidence>
<sequence length="525" mass="57071">MGFLQPGHTRPRICCPACCHARCKACGERGERGAVHRACNFKRRTAAVHHRTRPAVLQQYRPAPVESEAWRKAPPSSDRCKNARIFHHGPAGTVEYWSIFGEKKGALRASGSVRALTSTPRGYVVATDQGLWRVRTDTLNSTPDKTQAGKTAKQHQAPVPVRISTQRSCVALFATENMLIALFADGAVRAYDADGENELFSLTLPCTFSSAAQCRVQGDEIVLSDTARAITLSAGGALKWNISLYETPFTPLITTDGLVVSAGGWVLNAYRAETRLIDHTPIYNRDSYFHVLGSSRRAHVQEAPPSRPAAPAKRSPYDSIFSSDPFFSSPAPAKNSGKTDNAQETHTTSPPGPYATPELLLQAVQTSLKEGNVGPREPAYARSLHALLTSPHHARARAPAVTSARRAQAATLLGALGAHEYRDALLELLKEQDYTVLEGILKGLTRCTFGLDERALLALYRVTRAKDARAESLMRAACDALAACARSAPRTLSEKAVSELSRISTGAFPYTIRAYARTLVQSMLR</sequence>
<proteinExistence type="predicted"/>
<organism>
    <name type="scientific">Treponema pallidum (strain Nichols)</name>
    <dbReference type="NCBI Taxonomy" id="243276"/>
    <lineage>
        <taxon>Bacteria</taxon>
        <taxon>Pseudomonadati</taxon>
        <taxon>Spirochaetota</taxon>
        <taxon>Spirochaetia</taxon>
        <taxon>Spirochaetales</taxon>
        <taxon>Treponemataceae</taxon>
        <taxon>Treponema</taxon>
    </lineage>
</organism>
<dbReference type="EMBL" id="AE000520">
    <property type="protein sequence ID" value="AAC65482.1"/>
    <property type="molecule type" value="Genomic_DNA"/>
</dbReference>
<dbReference type="PIR" id="G71317">
    <property type="entry name" value="G71317"/>
</dbReference>
<dbReference type="RefSeq" id="WP_010881936.1">
    <property type="nucleotide sequence ID" value="NC_000919.1"/>
</dbReference>
<dbReference type="IntAct" id="O83500">
    <property type="interactions" value="1"/>
</dbReference>
<dbReference type="STRING" id="243276.TP_0487"/>
<dbReference type="EnsemblBacteria" id="AAC65482">
    <property type="protein sequence ID" value="AAC65482"/>
    <property type="gene ID" value="TP_0487"/>
</dbReference>
<dbReference type="KEGG" id="tpa:TP_0487"/>
<dbReference type="PATRIC" id="fig|243276.5.peg.520"/>
<dbReference type="eggNOG" id="COG1520">
    <property type="taxonomic scope" value="Bacteria"/>
</dbReference>
<dbReference type="HOGENOM" id="CLU_518683_0_0_12"/>
<dbReference type="OrthoDB" id="355032at2"/>
<dbReference type="Proteomes" id="UP000000811">
    <property type="component" value="Chromosome"/>
</dbReference>
<dbReference type="Gene3D" id="1.25.10.10">
    <property type="entry name" value="Leucine-rich Repeat Variant"/>
    <property type="match status" value="1"/>
</dbReference>
<dbReference type="InterPro" id="IPR011989">
    <property type="entry name" value="ARM-like"/>
</dbReference>
<dbReference type="InterPro" id="IPR011047">
    <property type="entry name" value="Quinoprotein_ADH-like_sf"/>
</dbReference>
<dbReference type="SUPFAM" id="SSF50998">
    <property type="entry name" value="Quinoprotein alcohol dehydrogenase-like"/>
    <property type="match status" value="1"/>
</dbReference>
<name>Y487_TREPA</name>
<keyword id="KW-1185">Reference proteome</keyword>
<protein>
    <recommendedName>
        <fullName>Uncharacterized protein TP_0487</fullName>
    </recommendedName>
</protein>
<feature type="chain" id="PRO_0000202266" description="Uncharacterized protein TP_0487">
    <location>
        <begin position="1"/>
        <end position="525"/>
    </location>
</feature>
<feature type="region of interest" description="Disordered" evidence="1">
    <location>
        <begin position="139"/>
        <end position="158"/>
    </location>
</feature>
<feature type="region of interest" description="Disordered" evidence="1">
    <location>
        <begin position="330"/>
        <end position="356"/>
    </location>
</feature>
<feature type="compositionally biased region" description="Polar residues" evidence="1">
    <location>
        <begin position="139"/>
        <end position="149"/>
    </location>
</feature>
<feature type="compositionally biased region" description="Polar residues" evidence="1">
    <location>
        <begin position="336"/>
        <end position="349"/>
    </location>
</feature>
<gene>
    <name type="ordered locus">TP_0487</name>
</gene>